<keyword id="KW-0025">Alternative splicing</keyword>
<keyword id="KW-0966">Cell projection</keyword>
<keyword id="KW-0963">Cytoplasm</keyword>
<keyword id="KW-0488">Methylation</keyword>
<keyword id="KW-0597">Phosphoprotein</keyword>
<keyword id="KW-1185">Reference proteome</keyword>
<keyword id="KW-0678">Repressor</keyword>
<keyword id="KW-0770">Synapse</keyword>
<keyword id="KW-0771">Synaptosome</keyword>
<keyword id="KW-0810">Translation regulation</keyword>
<feature type="chain" id="PRO_0000097571" description="Protein Smaug homolog 1">
    <location>
        <begin position="1"/>
        <end position="718"/>
    </location>
</feature>
<feature type="domain" description="SAM">
    <location>
        <begin position="323"/>
        <end position="396"/>
    </location>
</feature>
<feature type="region of interest" description="Disordered" evidence="5">
    <location>
        <begin position="278"/>
        <end position="310"/>
    </location>
</feature>
<feature type="region of interest" description="Disordered" evidence="5">
    <location>
        <begin position="417"/>
        <end position="474"/>
    </location>
</feature>
<feature type="region of interest" description="Disordered" evidence="5">
    <location>
        <begin position="572"/>
        <end position="601"/>
    </location>
</feature>
<feature type="compositionally biased region" description="Low complexity" evidence="5">
    <location>
        <begin position="453"/>
        <end position="466"/>
    </location>
</feature>
<feature type="modified residue" description="Phosphoserine" evidence="4">
    <location>
        <position position="168"/>
    </location>
</feature>
<feature type="modified residue" description="Phosphoserine" evidence="4">
    <location>
        <position position="420"/>
    </location>
</feature>
<feature type="modified residue" description="Phosphothreonine" evidence="4">
    <location>
        <position position="424"/>
    </location>
</feature>
<feature type="modified residue" description="Omega-N-methylarginine" evidence="3">
    <location>
        <position position="573"/>
    </location>
</feature>
<feature type="modified residue" description="Phosphoserine" evidence="2">
    <location>
        <position position="580"/>
    </location>
</feature>
<feature type="splice variant" id="VSP_037780" description="In isoform 2 and isoform 3." evidence="6">
    <location>
        <begin position="1"/>
        <end position="101"/>
    </location>
</feature>
<feature type="splice variant" id="VSP_008206" description="In isoform 2." evidence="6">
    <original>ILSGQAHHSPLKRSVSLTPPMNVPNQPLGHGWMSHEDLRARGPQCLPSDHAPLSPQSSVASSGSGGSEHLEDQATARNTFQEEGSGMKD</original>
    <variation>N</variation>
    <location>
        <begin position="239"/>
        <end position="327"/>
    </location>
</feature>
<feature type="sequence conflict" description="In Ref. 1; BAB60796." evidence="7" ref="1">
    <original>A</original>
    <variation>T</variation>
    <location>
        <position position="312"/>
    </location>
</feature>
<feature type="sequence conflict" description="In Ref. 1; BAB60796." evidence="7" ref="1">
    <original>R</original>
    <variation>G</variation>
    <location>
        <position position="370"/>
    </location>
</feature>
<feature type="sequence conflict" description="In Ref. 1; BAB60796." evidence="7" ref="1">
    <original>ILTPIKA</original>
    <variation>TLSLHNR</variation>
    <location>
        <begin position="411"/>
        <end position="417"/>
    </location>
</feature>
<feature type="sequence conflict" description="In Ref. 1; BAB64436." evidence="7" ref="1">
    <original>R</original>
    <variation>C</variation>
    <location>
        <position position="528"/>
    </location>
</feature>
<feature type="sequence conflict" description="In Ref. 1; BAB64436." evidence="7" ref="1">
    <original>D</original>
    <variation>N</variation>
    <location>
        <position position="579"/>
    </location>
</feature>
<comment type="function">
    <text evidence="1">Acts as a translational repressor of SRE-containing messengers.</text>
</comment>
<comment type="subcellular location">
    <subcellularLocation>
        <location evidence="1">Cytoplasm</location>
    </subcellularLocation>
    <subcellularLocation>
        <location evidence="1">Cell projection</location>
        <location evidence="1">Dendrite</location>
    </subcellularLocation>
    <subcellularLocation>
        <location evidence="1">Synapse</location>
        <location evidence="1">Synaptosome</location>
    </subcellularLocation>
    <text evidence="1">Enriched in synaptoneurosomes. Shuttles between the nucleus and the cytoplasm in a CRM1-dependent manner. Colocalizes throughout the cytoplasm in granules with polyadenylated RNAs, PABPC1 and STAU1. Also frequently colocalizes in cytoplasmic stress granule-like foci with ELAVL1, TIA1 and TIAL1 (By similarity).</text>
</comment>
<comment type="alternative products">
    <event type="alternative splicing"/>
    <isoform>
        <id>Q95LV5-1</id>
        <name>1</name>
        <sequence type="displayed"/>
    </isoform>
    <isoform>
        <id>Q95LV5-2</id>
        <name>2</name>
        <sequence type="described" ref="VSP_037780 VSP_008206"/>
    </isoform>
    <isoform>
        <id>Q95LV5-3</id>
        <name>3</name>
        <sequence type="described" ref="VSP_037780"/>
    </isoform>
</comment>
<comment type="similarity">
    <text evidence="7">Belongs to the SMAUG family.</text>
</comment>
<protein>
    <recommendedName>
        <fullName>Protein Smaug homolog 1</fullName>
        <shortName>Smaug 1</shortName>
    </recommendedName>
    <alternativeName>
        <fullName>Sterile alpha motif domain-containing protein 4A</fullName>
    </alternativeName>
</protein>
<proteinExistence type="evidence at transcript level"/>
<gene>
    <name type="primary">SAMD4A</name>
    <name type="synonym">SAMD4</name>
    <name type="synonym">SMAUG1</name>
    <name type="ORF">QtrA-10501</name>
    <name type="ORF">QtsA-10881</name>
    <name type="ORF">QtsA-17616</name>
</gene>
<accession>Q95LV5</accession>
<accession>Q95K80</accession>
<accession>Q95LZ8</accession>
<reference key="1">
    <citation type="journal article" date="2002" name="BMC Genomics">
        <title>Cynomolgus monkey testicular cDNAs for discovery of novel human genes in the human genome sequence.</title>
        <authorList>
            <person name="Osada N."/>
            <person name="Hida M."/>
            <person name="Kusuda J."/>
            <person name="Tanuma R."/>
            <person name="Hirata M."/>
            <person name="Suto Y."/>
            <person name="Hirai M."/>
            <person name="Terao K."/>
            <person name="Sugano S."/>
            <person name="Hashimoto K."/>
        </authorList>
    </citation>
    <scope>NUCLEOTIDE SEQUENCE [LARGE SCALE MRNA] (ISOFORMS 2 AND 3)</scope>
    <scope>NUCLEOTIDE SEQUENCE [LARGE SCALE MRNA] OF 1-417 (ISOFORM 1)</scope>
    <source>
        <tissue>Temporal cortex</tissue>
        <tissue>Testis</tissue>
    </source>
</reference>
<sequence length="718" mass="79426">MMFRDQVGVLAGWFKGWNECEQTVALLSLLKRVSQTQARFLQLCLEHSLADCVELHVLEREANSPGIINQWQQESKDKVISLLLTHLPLLKPGNLDAKVEYMKLLPKILAHSIEHNQHIEESRQLLSYALIHPATSLEDRSALAMWLNHLEDRTSTSFGGQNRGRSDSVDYGQTHYYHQRQNSDDKLNGWQNSRDSGICINASNWQDKSMGCENGHVPLYSSSSVPTTINTIGTSTSTILSGQAHHSPLKRSVSLTPPMNVPNQPLGHGWMSHEDLRARGPQCLPSDHAPLSPQSSVASSGSGGSEHLEDQATARNTFQEEGSGMKDVPAWLKSLRLHKYAALFSQMTYEEMMALTECQLEAQNVTKGARHKIVISIQKLKERQNLLKSLERDIIEGGSLRVPLQELHQMILTPIKAYGSPSTTPEARPREPQAPRQPSLMGPESQSPDCKDGATATGATATPSAGASGGLQPHQLSSCDGELAVAPLPEGDLPGQFTRVMGKVCTQLLVSRPDEENISSYLQLIDKRLIHEAFTETQKKRLLSWKQQVQKLFRSFPRKTLLDISGYRQQRNRGFGQSDSLPTAGSMGSGMGRRNPRQYQIPSRNVPSARLGLLGTSGFVSSNQRNTTAAPTIMKQGRQNLWFANPGGSNSMPSRTHSSVQRTRSLPVHTSPQNMLMFQQPEFQLPVTEPDINNRLESLCLSMTEHALGDGVDRTSTI</sequence>
<evidence type="ECO:0000250" key="1"/>
<evidence type="ECO:0000250" key="2">
    <source>
        <dbReference type="UniProtKB" id="B5DF21"/>
    </source>
</evidence>
<evidence type="ECO:0000250" key="3">
    <source>
        <dbReference type="UniProtKB" id="Q8CBY1"/>
    </source>
</evidence>
<evidence type="ECO:0000250" key="4">
    <source>
        <dbReference type="UniProtKB" id="Q9UPU9"/>
    </source>
</evidence>
<evidence type="ECO:0000256" key="5">
    <source>
        <dbReference type="SAM" id="MobiDB-lite"/>
    </source>
</evidence>
<evidence type="ECO:0000303" key="6">
    <source>
    </source>
</evidence>
<evidence type="ECO:0000305" key="7"/>
<name>SMAG1_MACFA</name>
<dbReference type="EMBL" id="AB063088">
    <property type="protein sequence ID" value="BAB60796.1"/>
    <property type="molecule type" value="mRNA"/>
</dbReference>
<dbReference type="EMBL" id="AB071043">
    <property type="protein sequence ID" value="BAB64436.1"/>
    <property type="molecule type" value="mRNA"/>
</dbReference>
<dbReference type="EMBL" id="AB071086">
    <property type="protein sequence ID" value="BAB64480.1"/>
    <property type="molecule type" value="mRNA"/>
</dbReference>
<dbReference type="RefSeq" id="XP_015309293.1">
    <property type="nucleotide sequence ID" value="XM_015453807.1"/>
</dbReference>
<dbReference type="SMR" id="Q95LV5"/>
<dbReference type="STRING" id="9541.ENSMFAP00000028684"/>
<dbReference type="eggNOG" id="KOG3791">
    <property type="taxonomic scope" value="Eukaryota"/>
</dbReference>
<dbReference type="Proteomes" id="UP000233100">
    <property type="component" value="Unplaced"/>
</dbReference>
<dbReference type="GO" id="GO:0030425">
    <property type="term" value="C:dendrite"/>
    <property type="evidence" value="ECO:0007669"/>
    <property type="project" value="UniProtKB-SubCell"/>
</dbReference>
<dbReference type="GO" id="GO:0000932">
    <property type="term" value="C:P-body"/>
    <property type="evidence" value="ECO:0007669"/>
    <property type="project" value="TreeGrafter"/>
</dbReference>
<dbReference type="GO" id="GO:0045202">
    <property type="term" value="C:synapse"/>
    <property type="evidence" value="ECO:0007669"/>
    <property type="project" value="UniProtKB-SubCell"/>
</dbReference>
<dbReference type="GO" id="GO:0003729">
    <property type="term" value="F:mRNA binding"/>
    <property type="evidence" value="ECO:0007669"/>
    <property type="project" value="TreeGrafter"/>
</dbReference>
<dbReference type="GO" id="GO:0030371">
    <property type="term" value="F:translation repressor activity"/>
    <property type="evidence" value="ECO:0007669"/>
    <property type="project" value="InterPro"/>
</dbReference>
<dbReference type="GO" id="GO:0000289">
    <property type="term" value="P:nuclear-transcribed mRNA poly(A) tail shortening"/>
    <property type="evidence" value="ECO:0007669"/>
    <property type="project" value="TreeGrafter"/>
</dbReference>
<dbReference type="CDD" id="cd09557">
    <property type="entry name" value="SAM_Smaug"/>
    <property type="match status" value="1"/>
</dbReference>
<dbReference type="FunFam" id="1.10.150.50:FF:000013">
    <property type="entry name" value="Protein Smaug homolog 1 isoform 2"/>
    <property type="match status" value="1"/>
</dbReference>
<dbReference type="FunFam" id="1.25.40.170:FF:000001">
    <property type="entry name" value="Protein Smaug homolog 1 isoform 2"/>
    <property type="match status" value="1"/>
</dbReference>
<dbReference type="FunFam" id="1.25.40.170:FF:000002">
    <property type="entry name" value="Protein Smaug homolog 1 isoform 2"/>
    <property type="match status" value="1"/>
</dbReference>
<dbReference type="Gene3D" id="1.25.40.170">
    <property type="entry name" value="Smaug, PHAT domain"/>
    <property type="match status" value="2"/>
</dbReference>
<dbReference type="Gene3D" id="1.10.150.50">
    <property type="entry name" value="Transcription Factor, Ets-1"/>
    <property type="match status" value="1"/>
</dbReference>
<dbReference type="InterPro" id="IPR037093">
    <property type="entry name" value="PHAT_dom_sf"/>
</dbReference>
<dbReference type="InterPro" id="IPR001660">
    <property type="entry name" value="SAM"/>
</dbReference>
<dbReference type="InterPro" id="IPR013761">
    <property type="entry name" value="SAM/pointed_sf"/>
</dbReference>
<dbReference type="InterPro" id="IPR050897">
    <property type="entry name" value="SMAUG/VTS1_RNA-bind"/>
</dbReference>
<dbReference type="InterPro" id="IPR037634">
    <property type="entry name" value="Smaug_SAM"/>
</dbReference>
<dbReference type="PANTHER" id="PTHR12515:SF8">
    <property type="entry name" value="PROTEIN SMAUG HOMOLOG 1"/>
    <property type="match status" value="1"/>
</dbReference>
<dbReference type="PANTHER" id="PTHR12515">
    <property type="entry name" value="STERILE ALPHA MOTIF DOMAIN CONTAINING PROTEIN 4-RELATED"/>
    <property type="match status" value="1"/>
</dbReference>
<dbReference type="Pfam" id="PF00536">
    <property type="entry name" value="SAM_1"/>
    <property type="match status" value="1"/>
</dbReference>
<dbReference type="Pfam" id="PF25479">
    <property type="entry name" value="Vts1"/>
    <property type="match status" value="1"/>
</dbReference>
<dbReference type="SMART" id="SM00454">
    <property type="entry name" value="SAM"/>
    <property type="match status" value="1"/>
</dbReference>
<dbReference type="SUPFAM" id="SSF47769">
    <property type="entry name" value="SAM/Pointed domain"/>
    <property type="match status" value="1"/>
</dbReference>
<organism>
    <name type="scientific">Macaca fascicularis</name>
    <name type="common">Crab-eating macaque</name>
    <name type="synonym">Cynomolgus monkey</name>
    <dbReference type="NCBI Taxonomy" id="9541"/>
    <lineage>
        <taxon>Eukaryota</taxon>
        <taxon>Metazoa</taxon>
        <taxon>Chordata</taxon>
        <taxon>Craniata</taxon>
        <taxon>Vertebrata</taxon>
        <taxon>Euteleostomi</taxon>
        <taxon>Mammalia</taxon>
        <taxon>Eutheria</taxon>
        <taxon>Euarchontoglires</taxon>
        <taxon>Primates</taxon>
        <taxon>Haplorrhini</taxon>
        <taxon>Catarrhini</taxon>
        <taxon>Cercopithecidae</taxon>
        <taxon>Cercopithecinae</taxon>
        <taxon>Macaca</taxon>
    </lineage>
</organism>